<keyword id="KW-1015">Disulfide bond</keyword>
<keyword id="KW-0928">Hypersensitive response elicitation</keyword>
<keyword id="KW-0964">Secreted</keyword>
<keyword id="KW-0732">Signal</keyword>
<comment type="function">
    <text evidence="1">Induces local and distal defense responses (incompatible hypersensitive reaction) in plants from the solanaceae and cruciferae families. Elicits leaf necrosis and causes the accumulation of pathogenesis-related proteins. Might interact with the lipidic molecules of the plasma membrane (By similarity).</text>
</comment>
<comment type="subcellular location">
    <subcellularLocation>
        <location>Secreted</location>
    </subcellularLocation>
</comment>
<comment type="similarity">
    <text evidence="4">Belongs to the elicitin family.</text>
</comment>
<feature type="signal peptide" evidence="2">
    <location>
        <begin position="1"/>
        <end position="19"/>
    </location>
</feature>
<feature type="chain" id="PRO_0000260282" description="Elicitin-like protein 1">
    <location>
        <begin position="20"/>
        <end position="170"/>
    </location>
</feature>
<feature type="region of interest" description="Disordered" evidence="3">
    <location>
        <begin position="122"/>
        <end position="170"/>
    </location>
</feature>
<feature type="compositionally biased region" description="Low complexity" evidence="3">
    <location>
        <begin position="126"/>
        <end position="162"/>
    </location>
</feature>
<feature type="disulfide bond" evidence="1">
    <location>
        <begin position="25"/>
        <end position="91"/>
    </location>
</feature>
<feature type="disulfide bond" evidence="1">
    <location>
        <begin position="47"/>
        <end position="76"/>
    </location>
</feature>
<feature type="disulfide bond" evidence="1">
    <location>
        <begin position="71"/>
        <end position="118"/>
    </location>
</feature>
<name>ELI1_PYTOL</name>
<proteinExistence type="evidence at transcript level"/>
<dbReference type="EMBL" id="AB217820">
    <property type="protein sequence ID" value="BAE95199.1"/>
    <property type="molecule type" value="mRNA"/>
</dbReference>
<dbReference type="SMR" id="Q1ESR5"/>
<dbReference type="GO" id="GO:0005576">
    <property type="term" value="C:extracellular region"/>
    <property type="evidence" value="ECO:0007669"/>
    <property type="project" value="UniProtKB-SubCell"/>
</dbReference>
<dbReference type="GO" id="GO:0052040">
    <property type="term" value="P:symbiont-mediated perturbation of host programmed cell death"/>
    <property type="evidence" value="ECO:0007669"/>
    <property type="project" value="UniProtKB-KW"/>
</dbReference>
<dbReference type="Gene3D" id="1.10.239.10">
    <property type="entry name" value="Elicitin domain"/>
    <property type="match status" value="1"/>
</dbReference>
<dbReference type="InterPro" id="IPR002200">
    <property type="entry name" value="Elicitin"/>
</dbReference>
<dbReference type="InterPro" id="IPR036470">
    <property type="entry name" value="Elicitin_sf"/>
</dbReference>
<dbReference type="Pfam" id="PF00964">
    <property type="entry name" value="Elicitin"/>
    <property type="match status" value="1"/>
</dbReference>
<dbReference type="PRINTS" id="PR00948">
    <property type="entry name" value="ELICITIN"/>
</dbReference>
<dbReference type="SMART" id="SM01187">
    <property type="entry name" value="Elicitin"/>
    <property type="match status" value="1"/>
</dbReference>
<dbReference type="SUPFAM" id="SSF48647">
    <property type="entry name" value="Fungal elicitin"/>
    <property type="match status" value="1"/>
</dbReference>
<protein>
    <recommendedName>
        <fullName>Elicitin-like protein 1</fullName>
    </recommendedName>
</protein>
<organism>
    <name type="scientific">Pythium oligandrum</name>
    <name type="common">Mycoparasitic fungus</name>
    <dbReference type="NCBI Taxonomy" id="41045"/>
    <lineage>
        <taxon>Eukaryota</taxon>
        <taxon>Sar</taxon>
        <taxon>Stramenopiles</taxon>
        <taxon>Oomycota</taxon>
        <taxon>Pythiales</taxon>
        <taxon>Pythiaceae</taxon>
        <taxon>Pythium</taxon>
    </lineage>
</organism>
<gene>
    <name type="primary">POD-1</name>
</gene>
<reference key="1">
    <citation type="journal article" date="2006" name="Mol. Plant Pathol.">
        <title>Novel elicitin-like proteins isolated from the cell wall of the biocontrol agent Pythium oligandrum induce defence-related genes in sugar beet.</title>
        <authorList>
            <person name="Takenaka S."/>
            <person name="Nakamura Y."/>
            <person name="Kono T."/>
            <person name="Sekiguchi H."/>
            <person name="Masunaka A."/>
            <person name="Takahashi H."/>
        </authorList>
        <dbReference type="AGRICOLA" id="IND43833169"/>
    </citation>
    <scope>NUCLEOTIDE SEQUENCE [MRNA]</scope>
</reference>
<sequence>MFSKTLVVLAAVAAVTVNGLTKEECDAAFTGEVGKLTKDALPLVQPCSSDSGFSMVPPKGLPTDDQYVKMCASKNCRDLLDVIKKAGLKDCELNFGSVFPGSVPLNVYQLGQGFDAKCASIGGGSTPTTAPPTSTTPTTAPPTGTTPTTAPPAGTTPGVTPSPTTPKPAC</sequence>
<evidence type="ECO:0000250" key="1"/>
<evidence type="ECO:0000255" key="2"/>
<evidence type="ECO:0000256" key="3">
    <source>
        <dbReference type="SAM" id="MobiDB-lite"/>
    </source>
</evidence>
<evidence type="ECO:0000305" key="4"/>
<accession>Q1ESR5</accession>